<protein>
    <recommendedName>
        <fullName evidence="1">Ketol-acid reductoisomerase (NADP(+))</fullName>
        <shortName evidence="1">KARI</shortName>
        <ecNumber evidence="1">1.1.1.86</ecNumber>
    </recommendedName>
    <alternativeName>
        <fullName evidence="1">Acetohydroxy-acid isomeroreductase</fullName>
        <shortName evidence="1">AHIR</shortName>
    </alternativeName>
    <alternativeName>
        <fullName evidence="1">Alpha-keto-beta-hydroxylacyl reductoisomerase</fullName>
    </alternativeName>
    <alternativeName>
        <fullName evidence="1">Ketol-acid reductoisomerase type 1</fullName>
    </alternativeName>
    <alternativeName>
        <fullName evidence="1">Ketol-acid reductoisomerase type I</fullName>
    </alternativeName>
</protein>
<evidence type="ECO:0000255" key="1">
    <source>
        <dbReference type="HAMAP-Rule" id="MF_00435"/>
    </source>
</evidence>
<evidence type="ECO:0000255" key="2">
    <source>
        <dbReference type="PROSITE-ProRule" id="PRU01197"/>
    </source>
</evidence>
<evidence type="ECO:0000255" key="3">
    <source>
        <dbReference type="PROSITE-ProRule" id="PRU01198"/>
    </source>
</evidence>
<evidence type="ECO:0007829" key="4">
    <source>
        <dbReference type="PDB" id="7LAT"/>
    </source>
</evidence>
<proteinExistence type="evidence at protein level"/>
<organism>
    <name type="scientific">Campylobacter jejuni subsp. jejuni serotype O:2 (strain ATCC 700819 / NCTC 11168)</name>
    <dbReference type="NCBI Taxonomy" id="192222"/>
    <lineage>
        <taxon>Bacteria</taxon>
        <taxon>Pseudomonadati</taxon>
        <taxon>Campylobacterota</taxon>
        <taxon>Epsilonproteobacteria</taxon>
        <taxon>Campylobacterales</taxon>
        <taxon>Campylobacteraceae</taxon>
        <taxon>Campylobacter</taxon>
    </lineage>
</organism>
<accession>Q9PHN5</accession>
<accession>Q0PAN6</accession>
<reference key="1">
    <citation type="journal article" date="2000" name="Nature">
        <title>The genome sequence of the food-borne pathogen Campylobacter jejuni reveals hypervariable sequences.</title>
        <authorList>
            <person name="Parkhill J."/>
            <person name="Wren B.W."/>
            <person name="Mungall K.L."/>
            <person name="Ketley J.M."/>
            <person name="Churcher C.M."/>
            <person name="Basham D."/>
            <person name="Chillingworth T."/>
            <person name="Davies R.M."/>
            <person name="Feltwell T."/>
            <person name="Holroyd S."/>
            <person name="Jagels K."/>
            <person name="Karlyshev A.V."/>
            <person name="Moule S."/>
            <person name="Pallen M.J."/>
            <person name="Penn C.W."/>
            <person name="Quail M.A."/>
            <person name="Rajandream M.A."/>
            <person name="Rutherford K.M."/>
            <person name="van Vliet A.H.M."/>
            <person name="Whitehead S."/>
            <person name="Barrell B.G."/>
        </authorList>
    </citation>
    <scope>NUCLEOTIDE SEQUENCE [LARGE SCALE GENOMIC DNA]</scope>
    <source>
        <strain>ATCC 700819 / NCTC 11168</strain>
    </source>
</reference>
<name>ILVC_CAMJE</name>
<dbReference type="EC" id="1.1.1.86" evidence="1"/>
<dbReference type="EMBL" id="AL111168">
    <property type="protein sequence ID" value="CAL34777.1"/>
    <property type="molecule type" value="Genomic_DNA"/>
</dbReference>
<dbReference type="PIR" id="G81411">
    <property type="entry name" value="G81411"/>
</dbReference>
<dbReference type="RefSeq" id="WP_002858483.1">
    <property type="nucleotide sequence ID" value="NZ_SZUC01000002.1"/>
</dbReference>
<dbReference type="RefSeq" id="YP_002344061.1">
    <property type="nucleotide sequence ID" value="NC_002163.1"/>
</dbReference>
<dbReference type="PDB" id="7LAT">
    <property type="method" value="X-ray"/>
    <property type="resolution" value="2.47 A"/>
    <property type="chains" value="A=1-330"/>
</dbReference>
<dbReference type="PDB" id="8CY8">
    <property type="method" value="EM"/>
    <property type="resolution" value="2.94 A"/>
    <property type="chains" value="A/B/C/D/E/F/G/H/I/J/K/L=3-330"/>
</dbReference>
<dbReference type="PDB" id="8SXD">
    <property type="method" value="X-ray"/>
    <property type="resolution" value="2.59 A"/>
    <property type="chains" value="A=1-330"/>
</dbReference>
<dbReference type="PDB" id="8UPN">
    <property type="method" value="X-ray"/>
    <property type="resolution" value="2.59 A"/>
    <property type="chains" value="A=1-330"/>
</dbReference>
<dbReference type="PDB" id="8UPP">
    <property type="method" value="X-ray"/>
    <property type="resolution" value="1.78 A"/>
    <property type="chains" value="A/B/C/D/E/F/G/H/I/J/K/L=1-330"/>
</dbReference>
<dbReference type="PDB" id="8UPQ">
    <property type="method" value="X-ray"/>
    <property type="resolution" value="2.45 A"/>
    <property type="chains" value="A/B/C/D/E/F=1-340"/>
</dbReference>
<dbReference type="PDBsum" id="7LAT"/>
<dbReference type="PDBsum" id="8CY8"/>
<dbReference type="PDBsum" id="8SXD"/>
<dbReference type="PDBsum" id="8UPN"/>
<dbReference type="PDBsum" id="8UPP"/>
<dbReference type="PDBsum" id="8UPQ"/>
<dbReference type="SMR" id="Q9PHN5"/>
<dbReference type="IntAct" id="Q9PHN5">
    <property type="interactions" value="41"/>
</dbReference>
<dbReference type="STRING" id="192222.Cj0632"/>
<dbReference type="PaxDb" id="192222-Cj0632"/>
<dbReference type="EnsemblBacteria" id="CAL34777">
    <property type="protein sequence ID" value="CAL34777"/>
    <property type="gene ID" value="Cj0632"/>
</dbReference>
<dbReference type="GeneID" id="904961"/>
<dbReference type="KEGG" id="cje:Cj0632"/>
<dbReference type="PATRIC" id="fig|192222.6.peg.624"/>
<dbReference type="eggNOG" id="COG0059">
    <property type="taxonomic scope" value="Bacteria"/>
</dbReference>
<dbReference type="HOGENOM" id="CLU_033821_0_1_7"/>
<dbReference type="OrthoDB" id="9804088at2"/>
<dbReference type="UniPathway" id="UPA00047">
    <property type="reaction ID" value="UER00056"/>
</dbReference>
<dbReference type="UniPathway" id="UPA00049">
    <property type="reaction ID" value="UER00060"/>
</dbReference>
<dbReference type="Proteomes" id="UP000000799">
    <property type="component" value="Chromosome"/>
</dbReference>
<dbReference type="GO" id="GO:0005829">
    <property type="term" value="C:cytosol"/>
    <property type="evidence" value="ECO:0007669"/>
    <property type="project" value="TreeGrafter"/>
</dbReference>
<dbReference type="GO" id="GO:0004455">
    <property type="term" value="F:ketol-acid reductoisomerase activity"/>
    <property type="evidence" value="ECO:0007669"/>
    <property type="project" value="UniProtKB-UniRule"/>
</dbReference>
<dbReference type="GO" id="GO:0000287">
    <property type="term" value="F:magnesium ion binding"/>
    <property type="evidence" value="ECO:0007669"/>
    <property type="project" value="UniProtKB-UniRule"/>
</dbReference>
<dbReference type="GO" id="GO:0050661">
    <property type="term" value="F:NADP binding"/>
    <property type="evidence" value="ECO:0007669"/>
    <property type="project" value="InterPro"/>
</dbReference>
<dbReference type="GO" id="GO:0009097">
    <property type="term" value="P:isoleucine biosynthetic process"/>
    <property type="evidence" value="ECO:0007669"/>
    <property type="project" value="UniProtKB-UniRule"/>
</dbReference>
<dbReference type="GO" id="GO:0009099">
    <property type="term" value="P:L-valine biosynthetic process"/>
    <property type="evidence" value="ECO:0007669"/>
    <property type="project" value="UniProtKB-UniRule"/>
</dbReference>
<dbReference type="FunFam" id="3.40.50.720:FF:000023">
    <property type="entry name" value="Ketol-acid reductoisomerase (NADP(+))"/>
    <property type="match status" value="1"/>
</dbReference>
<dbReference type="Gene3D" id="6.10.240.10">
    <property type="match status" value="1"/>
</dbReference>
<dbReference type="Gene3D" id="3.40.50.720">
    <property type="entry name" value="NAD(P)-binding Rossmann-like Domain"/>
    <property type="match status" value="1"/>
</dbReference>
<dbReference type="HAMAP" id="MF_00435">
    <property type="entry name" value="IlvC"/>
    <property type="match status" value="1"/>
</dbReference>
<dbReference type="InterPro" id="IPR008927">
    <property type="entry name" value="6-PGluconate_DH-like_C_sf"/>
</dbReference>
<dbReference type="InterPro" id="IPR013023">
    <property type="entry name" value="KARI"/>
</dbReference>
<dbReference type="InterPro" id="IPR000506">
    <property type="entry name" value="KARI_C"/>
</dbReference>
<dbReference type="InterPro" id="IPR013116">
    <property type="entry name" value="KARI_N"/>
</dbReference>
<dbReference type="InterPro" id="IPR014359">
    <property type="entry name" value="KARI_prok"/>
</dbReference>
<dbReference type="InterPro" id="IPR036291">
    <property type="entry name" value="NAD(P)-bd_dom_sf"/>
</dbReference>
<dbReference type="NCBIfam" id="TIGR00465">
    <property type="entry name" value="ilvC"/>
    <property type="match status" value="1"/>
</dbReference>
<dbReference type="NCBIfam" id="NF004017">
    <property type="entry name" value="PRK05479.1"/>
    <property type="match status" value="1"/>
</dbReference>
<dbReference type="NCBIfam" id="NF009940">
    <property type="entry name" value="PRK13403.1"/>
    <property type="match status" value="1"/>
</dbReference>
<dbReference type="PANTHER" id="PTHR21371">
    <property type="entry name" value="KETOL-ACID REDUCTOISOMERASE, MITOCHONDRIAL"/>
    <property type="match status" value="1"/>
</dbReference>
<dbReference type="PANTHER" id="PTHR21371:SF1">
    <property type="entry name" value="KETOL-ACID REDUCTOISOMERASE, MITOCHONDRIAL"/>
    <property type="match status" value="1"/>
</dbReference>
<dbReference type="Pfam" id="PF01450">
    <property type="entry name" value="KARI_C"/>
    <property type="match status" value="1"/>
</dbReference>
<dbReference type="Pfam" id="PF07991">
    <property type="entry name" value="KARI_N"/>
    <property type="match status" value="1"/>
</dbReference>
<dbReference type="PIRSF" id="PIRSF000116">
    <property type="entry name" value="IlvC_gammaproteo"/>
    <property type="match status" value="1"/>
</dbReference>
<dbReference type="SUPFAM" id="SSF48179">
    <property type="entry name" value="6-phosphogluconate dehydrogenase C-terminal domain-like"/>
    <property type="match status" value="1"/>
</dbReference>
<dbReference type="SUPFAM" id="SSF51735">
    <property type="entry name" value="NAD(P)-binding Rossmann-fold domains"/>
    <property type="match status" value="1"/>
</dbReference>
<dbReference type="PROSITE" id="PS51851">
    <property type="entry name" value="KARI_C"/>
    <property type="match status" value="1"/>
</dbReference>
<dbReference type="PROSITE" id="PS51850">
    <property type="entry name" value="KARI_N"/>
    <property type="match status" value="1"/>
</dbReference>
<keyword id="KW-0002">3D-structure</keyword>
<keyword id="KW-0028">Amino-acid biosynthesis</keyword>
<keyword id="KW-0100">Branched-chain amino acid biosynthesis</keyword>
<keyword id="KW-0460">Magnesium</keyword>
<keyword id="KW-0479">Metal-binding</keyword>
<keyword id="KW-0521">NADP</keyword>
<keyword id="KW-0560">Oxidoreductase</keyword>
<keyword id="KW-1185">Reference proteome</keyword>
<sequence>MAITVYYDKDCDLNLIKSKKVAIIGFGSQGHAHAMNLRDNGVNVTIGLREGSVSAVKAKNAGFEVVSVSEASKIADVIMILAPDEIQADIFNVEIKPNLSEGKAIAFAHGFNIHYGQIVVPKGVDVIMIAPKAPGHTVRNEFTLGGGTPCLIAIHQDESKNAKNLALSYASAIGGGRTGIIETTFKAETETDLFGEQAVLCGGLSALIQAGFETLVEAGYEPEMAYFECLHEMKLIVDLIYQGGIADMRYSISNTAEYGDYITGPKIITEETKKAMKGVLKDIQNGVFAKDFILERRAGFARMHAERKNMNDSLIEKTGRNLRAMMPWISAKKLVDKDKN</sequence>
<gene>
    <name evidence="1" type="primary">ilvC</name>
    <name type="ordered locus">Cj0632</name>
</gene>
<comment type="function">
    <text evidence="1">Involved in the biosynthesis of branched-chain amino acids (BCAA). Catalyzes an alkyl-migration followed by a ketol-acid reduction of (S)-2-acetolactate (S2AL) to yield (R)-2,3-dihydroxy-isovalerate. In the isomerase reaction, S2AL is rearranged via a Mg-dependent methyl migration to produce 3-hydroxy-3-methyl-2-ketobutyrate (HMKB). In the reductase reaction, this 2-ketoacid undergoes a metal-dependent reduction by NADPH to yield (R)-2,3-dihydroxy-isovalerate.</text>
</comment>
<comment type="catalytic activity">
    <reaction evidence="1">
        <text>(2R)-2,3-dihydroxy-3-methylbutanoate + NADP(+) = (2S)-2-acetolactate + NADPH + H(+)</text>
        <dbReference type="Rhea" id="RHEA:22068"/>
        <dbReference type="ChEBI" id="CHEBI:15378"/>
        <dbReference type="ChEBI" id="CHEBI:49072"/>
        <dbReference type="ChEBI" id="CHEBI:57783"/>
        <dbReference type="ChEBI" id="CHEBI:58349"/>
        <dbReference type="ChEBI" id="CHEBI:58476"/>
        <dbReference type="EC" id="1.1.1.86"/>
    </reaction>
</comment>
<comment type="catalytic activity">
    <reaction evidence="1">
        <text>(2R,3R)-2,3-dihydroxy-3-methylpentanoate + NADP(+) = (S)-2-ethyl-2-hydroxy-3-oxobutanoate + NADPH + H(+)</text>
        <dbReference type="Rhea" id="RHEA:13493"/>
        <dbReference type="ChEBI" id="CHEBI:15378"/>
        <dbReference type="ChEBI" id="CHEBI:49256"/>
        <dbReference type="ChEBI" id="CHEBI:49258"/>
        <dbReference type="ChEBI" id="CHEBI:57783"/>
        <dbReference type="ChEBI" id="CHEBI:58349"/>
        <dbReference type="EC" id="1.1.1.86"/>
    </reaction>
</comment>
<comment type="cofactor">
    <cofactor evidence="1">
        <name>Mg(2+)</name>
        <dbReference type="ChEBI" id="CHEBI:18420"/>
    </cofactor>
    <text evidence="1">Binds 2 magnesium ions per subunit.</text>
</comment>
<comment type="pathway">
    <text evidence="1">Amino-acid biosynthesis; L-isoleucine biosynthesis; L-isoleucine from 2-oxobutanoate: step 2/4.</text>
</comment>
<comment type="pathway">
    <text evidence="1">Amino-acid biosynthesis; L-valine biosynthesis; L-valine from pyruvate: step 2/4.</text>
</comment>
<comment type="similarity">
    <text evidence="1">Belongs to the ketol-acid reductoisomerase family.</text>
</comment>
<feature type="chain" id="PRO_0000151297" description="Ketol-acid reductoisomerase (NADP(+))">
    <location>
        <begin position="1"/>
        <end position="340"/>
    </location>
</feature>
<feature type="domain" description="KARI N-terminal Rossmann" evidence="2">
    <location>
        <begin position="1"/>
        <end position="183"/>
    </location>
</feature>
<feature type="domain" description="KARI C-terminal knotted" evidence="3">
    <location>
        <begin position="184"/>
        <end position="329"/>
    </location>
</feature>
<feature type="active site" evidence="1">
    <location>
        <position position="109"/>
    </location>
</feature>
<feature type="binding site" evidence="1">
    <location>
        <begin position="26"/>
        <end position="29"/>
    </location>
    <ligand>
        <name>NADP(+)</name>
        <dbReference type="ChEBI" id="CHEBI:58349"/>
    </ligand>
</feature>
<feature type="binding site" evidence="1">
    <location>
        <position position="49"/>
    </location>
    <ligand>
        <name>NADP(+)</name>
        <dbReference type="ChEBI" id="CHEBI:58349"/>
    </ligand>
</feature>
<feature type="binding site" evidence="1">
    <location>
        <position position="52"/>
    </location>
    <ligand>
        <name>NADP(+)</name>
        <dbReference type="ChEBI" id="CHEBI:58349"/>
    </ligand>
</feature>
<feature type="binding site" evidence="1">
    <location>
        <position position="54"/>
    </location>
    <ligand>
        <name>NADP(+)</name>
        <dbReference type="ChEBI" id="CHEBI:58349"/>
    </ligand>
</feature>
<feature type="binding site" evidence="1">
    <location>
        <begin position="84"/>
        <end position="87"/>
    </location>
    <ligand>
        <name>NADP(+)</name>
        <dbReference type="ChEBI" id="CHEBI:58349"/>
    </ligand>
</feature>
<feature type="binding site" evidence="1">
    <location>
        <position position="135"/>
    </location>
    <ligand>
        <name>NADP(+)</name>
        <dbReference type="ChEBI" id="CHEBI:58349"/>
    </ligand>
</feature>
<feature type="binding site" evidence="1">
    <location>
        <position position="192"/>
    </location>
    <ligand>
        <name>Mg(2+)</name>
        <dbReference type="ChEBI" id="CHEBI:18420"/>
        <label>1</label>
    </ligand>
</feature>
<feature type="binding site" evidence="1">
    <location>
        <position position="192"/>
    </location>
    <ligand>
        <name>Mg(2+)</name>
        <dbReference type="ChEBI" id="CHEBI:18420"/>
        <label>2</label>
    </ligand>
</feature>
<feature type="binding site" evidence="1">
    <location>
        <position position="196"/>
    </location>
    <ligand>
        <name>Mg(2+)</name>
        <dbReference type="ChEBI" id="CHEBI:18420"/>
        <label>1</label>
    </ligand>
</feature>
<feature type="binding site" evidence="1">
    <location>
        <position position="228"/>
    </location>
    <ligand>
        <name>Mg(2+)</name>
        <dbReference type="ChEBI" id="CHEBI:18420"/>
        <label>2</label>
    </ligand>
</feature>
<feature type="binding site" evidence="1">
    <location>
        <position position="232"/>
    </location>
    <ligand>
        <name>Mg(2+)</name>
        <dbReference type="ChEBI" id="CHEBI:18420"/>
        <label>2</label>
    </ligand>
</feature>
<feature type="binding site" evidence="1">
    <location>
        <position position="253"/>
    </location>
    <ligand>
        <name>substrate</name>
    </ligand>
</feature>
<feature type="helix" evidence="4">
    <location>
        <begin position="8"/>
        <end position="10"/>
    </location>
</feature>
<feature type="helix" evidence="4">
    <location>
        <begin position="13"/>
        <end position="17"/>
    </location>
</feature>
<feature type="strand" evidence="4">
    <location>
        <begin position="21"/>
        <end position="24"/>
    </location>
</feature>
<feature type="helix" evidence="4">
    <location>
        <begin position="28"/>
        <end position="39"/>
    </location>
</feature>
<feature type="strand" evidence="4">
    <location>
        <begin position="44"/>
        <end position="47"/>
    </location>
</feature>
<feature type="helix" evidence="4">
    <location>
        <begin position="53"/>
        <end position="60"/>
    </location>
</feature>
<feature type="strand" evidence="4">
    <location>
        <begin position="64"/>
        <end position="66"/>
    </location>
</feature>
<feature type="helix" evidence="4">
    <location>
        <begin position="68"/>
        <end position="74"/>
    </location>
</feature>
<feature type="strand" evidence="4">
    <location>
        <begin position="76"/>
        <end position="80"/>
    </location>
</feature>
<feature type="turn" evidence="4">
    <location>
        <begin position="84"/>
        <end position="88"/>
    </location>
</feature>
<feature type="helix" evidence="4">
    <location>
        <begin position="89"/>
        <end position="94"/>
    </location>
</feature>
<feature type="helix" evidence="4">
    <location>
        <begin position="96"/>
        <end position="98"/>
    </location>
</feature>
<feature type="strand" evidence="4">
    <location>
        <begin position="104"/>
        <end position="108"/>
    </location>
</feature>
<feature type="helix" evidence="4">
    <location>
        <begin position="111"/>
        <end position="114"/>
    </location>
</feature>
<feature type="strand" evidence="4">
    <location>
        <begin position="124"/>
        <end position="133"/>
    </location>
</feature>
<feature type="helix" evidence="4">
    <location>
        <begin position="135"/>
        <end position="143"/>
    </location>
</feature>
<feature type="strand" evidence="4">
    <location>
        <begin position="150"/>
        <end position="156"/>
    </location>
</feature>
<feature type="strand" evidence="4">
    <location>
        <begin position="158"/>
        <end position="160"/>
    </location>
</feature>
<feature type="helix" evidence="4">
    <location>
        <begin position="162"/>
        <end position="172"/>
    </location>
</feature>
<feature type="helix" evidence="4">
    <location>
        <begin position="175"/>
        <end position="177"/>
    </location>
</feature>
<feature type="strand" evidence="4">
    <location>
        <begin position="180"/>
        <end position="182"/>
    </location>
</feature>
<feature type="helix" evidence="4">
    <location>
        <begin position="185"/>
        <end position="198"/>
    </location>
</feature>
<feature type="turn" evidence="4">
    <location>
        <begin position="199"/>
        <end position="201"/>
    </location>
</feature>
<feature type="helix" evidence="4">
    <location>
        <begin position="202"/>
        <end position="217"/>
    </location>
</feature>
<feature type="helix" evidence="4">
    <location>
        <begin position="222"/>
        <end position="229"/>
    </location>
</feature>
<feature type="turn" evidence="4">
    <location>
        <begin position="230"/>
        <end position="232"/>
    </location>
</feature>
<feature type="helix" evidence="4">
    <location>
        <begin position="233"/>
        <end position="243"/>
    </location>
</feature>
<feature type="helix" evidence="4">
    <location>
        <begin position="245"/>
        <end position="251"/>
    </location>
</feature>
<feature type="helix" evidence="4">
    <location>
        <begin position="254"/>
        <end position="267"/>
    </location>
</feature>
<feature type="helix" evidence="4">
    <location>
        <begin position="270"/>
        <end position="284"/>
    </location>
</feature>
<feature type="helix" evidence="4">
    <location>
        <begin position="287"/>
        <end position="297"/>
    </location>
</feature>
<feature type="helix" evidence="4">
    <location>
        <begin position="301"/>
        <end position="311"/>
    </location>
</feature>
<feature type="helix" evidence="4">
    <location>
        <begin position="314"/>
        <end position="324"/>
    </location>
</feature>
<feature type="turn" evidence="4">
    <location>
        <begin position="327"/>
        <end position="329"/>
    </location>
</feature>